<keyword id="KW-0002">3D-structure</keyword>
<keyword id="KW-0121">Carboxypeptidase</keyword>
<keyword id="KW-0133">Cell shape</keyword>
<keyword id="KW-0961">Cell wall biogenesis/degradation</keyword>
<keyword id="KW-0378">Hydrolase</keyword>
<keyword id="KW-0573">Peptidoglycan synthesis</keyword>
<keyword id="KW-0574">Periplasm</keyword>
<keyword id="KW-0645">Protease</keyword>
<keyword id="KW-1185">Reference proteome</keyword>
<keyword id="KW-0732">Signal</keyword>
<organism>
    <name type="scientific">Mycobacterium tuberculosis (strain ATCC 25618 / H37Rv)</name>
    <dbReference type="NCBI Taxonomy" id="83332"/>
    <lineage>
        <taxon>Bacteria</taxon>
        <taxon>Bacillati</taxon>
        <taxon>Actinomycetota</taxon>
        <taxon>Actinomycetes</taxon>
        <taxon>Mycobacteriales</taxon>
        <taxon>Mycobacteriaceae</taxon>
        <taxon>Mycobacterium</taxon>
        <taxon>Mycobacterium tuberculosis complex</taxon>
    </lineage>
</organism>
<feature type="signal peptide" evidence="2">
    <location>
        <begin position="1"/>
        <end position="22"/>
    </location>
</feature>
<feature type="chain" id="PRO_5010244966" description="D-alanyl-D-alanine carboxypeptidase DacB2">
    <location>
        <begin position="23"/>
        <end position="291"/>
    </location>
</feature>
<feature type="active site" description="Acyl-ester intermediate" evidence="12">
    <location>
        <position position="69"/>
    </location>
</feature>
<feature type="active site" description="Proton acceptor" evidence="1">
    <location>
        <position position="72"/>
    </location>
</feature>
<feature type="active site" evidence="1">
    <location>
        <position position="124"/>
    </location>
</feature>
<feature type="strand" evidence="17">
    <location>
        <begin position="43"/>
        <end position="49"/>
    </location>
</feature>
<feature type="turn" evidence="17">
    <location>
        <begin position="50"/>
        <end position="52"/>
    </location>
</feature>
<feature type="strand" evidence="17">
    <location>
        <begin position="54"/>
        <end position="60"/>
    </location>
</feature>
<feature type="helix" evidence="17">
    <location>
        <begin position="68"/>
        <end position="71"/>
    </location>
</feature>
<feature type="helix" evidence="17">
    <location>
        <begin position="72"/>
        <end position="82"/>
    </location>
</feature>
<feature type="strand" evidence="17">
    <location>
        <begin position="88"/>
        <end position="90"/>
    </location>
</feature>
<feature type="helix" evidence="17">
    <location>
        <begin position="93"/>
        <end position="96"/>
    </location>
</feature>
<feature type="strand" evidence="17">
    <location>
        <begin position="110"/>
        <end position="112"/>
    </location>
</feature>
<feature type="helix" evidence="17">
    <location>
        <begin position="113"/>
        <end position="122"/>
    </location>
</feature>
<feature type="helix" evidence="17">
    <location>
        <begin position="126"/>
        <end position="135"/>
    </location>
</feature>
<feature type="helix" evidence="17">
    <location>
        <begin position="139"/>
        <end position="152"/>
    </location>
</feature>
<feature type="strand" evidence="17">
    <location>
        <begin position="161"/>
        <end position="166"/>
    </location>
</feature>
<feature type="helix" evidence="17">
    <location>
        <begin position="177"/>
        <end position="188"/>
    </location>
</feature>
<feature type="helix" evidence="17">
    <location>
        <begin position="191"/>
        <end position="198"/>
    </location>
</feature>
<feature type="strand" evidence="17">
    <location>
        <begin position="200"/>
        <end position="206"/>
    </location>
</feature>
<feature type="strand" evidence="17">
    <location>
        <begin position="209"/>
        <end position="214"/>
    </location>
</feature>
<feature type="helix" evidence="17">
    <location>
        <begin position="219"/>
        <end position="222"/>
    </location>
</feature>
<feature type="strand" evidence="17">
    <location>
        <begin position="226"/>
        <end position="234"/>
    </location>
</feature>
<feature type="turn" evidence="17">
    <location>
        <begin position="235"/>
        <end position="237"/>
    </location>
</feature>
<feature type="strand" evidence="17">
    <location>
        <begin position="238"/>
        <end position="247"/>
    </location>
</feature>
<feature type="strand" evidence="17">
    <location>
        <begin position="250"/>
        <end position="259"/>
    </location>
</feature>
<feature type="helix" evidence="17">
    <location>
        <begin position="268"/>
        <end position="281"/>
    </location>
</feature>
<feature type="strand" evidence="17">
    <location>
        <begin position="288"/>
        <end position="290"/>
    </location>
</feature>
<reference key="1">
    <citation type="journal article" date="1998" name="Nature">
        <title>Deciphering the biology of Mycobacterium tuberculosis from the complete genome sequence.</title>
        <authorList>
            <person name="Cole S.T."/>
            <person name="Brosch R."/>
            <person name="Parkhill J."/>
            <person name="Garnier T."/>
            <person name="Churcher C.M."/>
            <person name="Harris D.E."/>
            <person name="Gordon S.V."/>
            <person name="Eiglmeier K."/>
            <person name="Gas S."/>
            <person name="Barry C.E. III"/>
            <person name="Tekaia F."/>
            <person name="Badcock K."/>
            <person name="Basham D."/>
            <person name="Brown D."/>
            <person name="Chillingworth T."/>
            <person name="Connor R."/>
            <person name="Davies R.M."/>
            <person name="Devlin K."/>
            <person name="Feltwell T."/>
            <person name="Gentles S."/>
            <person name="Hamlin N."/>
            <person name="Holroyd S."/>
            <person name="Hornsby T."/>
            <person name="Jagels K."/>
            <person name="Krogh A."/>
            <person name="McLean J."/>
            <person name="Moule S."/>
            <person name="Murphy L.D."/>
            <person name="Oliver S."/>
            <person name="Osborne J."/>
            <person name="Quail M.A."/>
            <person name="Rajandream M.A."/>
            <person name="Rogers J."/>
            <person name="Rutter S."/>
            <person name="Seeger K."/>
            <person name="Skelton S."/>
            <person name="Squares S."/>
            <person name="Squares R."/>
            <person name="Sulston J.E."/>
            <person name="Taylor K."/>
            <person name="Whitehead S."/>
            <person name="Barrell B.G."/>
        </authorList>
    </citation>
    <scope>NUCLEOTIDE SEQUENCE [LARGE SCALE GENOMIC DNA]</scope>
    <source>
        <strain>ATCC 25618 / H37Rv</strain>
    </source>
</reference>
<reference evidence="16" key="2">
    <citation type="journal article" date="2011" name="Mol. Cell. Proteomics">
        <title>Proteogenomic analysis of Mycobacterium tuberculosis by high resolution mass spectrometry.</title>
        <authorList>
            <person name="Kelkar D.S."/>
            <person name="Kumar D."/>
            <person name="Kumar P."/>
            <person name="Balakrishnan L."/>
            <person name="Muthusamy B."/>
            <person name="Yadav A.K."/>
            <person name="Shrivastava P."/>
            <person name="Marimuthu A."/>
            <person name="Anand S."/>
            <person name="Sundaram H."/>
            <person name="Kingsbury R."/>
            <person name="Harsha H.C."/>
            <person name="Nair B."/>
            <person name="Prasad T.S."/>
            <person name="Chauhan D.S."/>
            <person name="Katoch K."/>
            <person name="Katoch V.M."/>
            <person name="Kumar P."/>
            <person name="Chaerkady R."/>
            <person name="Ramachandran S."/>
            <person name="Dash D."/>
            <person name="Pandey A."/>
        </authorList>
    </citation>
    <scope>IDENTIFICATION BY MASS SPECTROMETRY [LARGE SCALE ANALYSIS]</scope>
</reference>
<reference key="3">
    <citation type="journal article" date="2012" name="Microb. Pathog.">
        <title>Deletion and overexpression studies on DacB2, a putative low molecular mass penicillin binding protein from Mycobacterium tuberculosis H(37)Rv.</title>
        <authorList>
            <person name="Bourai N."/>
            <person name="Jacobs W.R. Jr."/>
            <person name="Narayanan S."/>
        </authorList>
    </citation>
    <scope>DISRUPTION PHENOTYPE</scope>
    <scope>OVEREXPRESSION</scope>
    <source>
        <strain>H37Rv</strain>
    </source>
</reference>
<reference key="4">
    <citation type="journal article" date="2012" name="Mol. Microbiol.">
        <title>Meropenem inhibits D,D-carboxypeptidase activity in Mycobacterium tuberculosis.</title>
        <authorList>
            <person name="Kumar P."/>
            <person name="Arora K."/>
            <person name="Lloyd J.R."/>
            <person name="Lee I.Y."/>
            <person name="Nair V."/>
            <person name="Fischer E."/>
            <person name="Boshoff H.I."/>
            <person name="Barry C.E. III"/>
        </authorList>
    </citation>
    <scope>FUNCTION</scope>
    <scope>CATALYTIC ACTIVITY</scope>
    <scope>ACTIVITY REGULATION</scope>
</reference>
<reference key="5">
    <citation type="journal article" date="2015" name="Microbiol. Res.">
        <title>Phenotypic characterization of a novel double knockout PknI/DacB2 from Mycobacterium tuberculosis.</title>
        <authorList>
            <person name="Kandasamy S."/>
            <person name="Narayanan S."/>
        </authorList>
    </citation>
    <scope>FUNCTION</scope>
    <scope>PATHWAY</scope>
    <scope>DISRUPTION PHENOTYPE</scope>
    <source>
        <strain>H37Rv</strain>
    </source>
</reference>
<reference evidence="14" key="6">
    <citation type="journal article" date="2014" name="PLoS ONE">
        <title>Subfamily-specific adaptations in the structures of two penicillin-binding proteins from Mycobacterium tuberculosis.</title>
        <authorList>
            <person name="Prigozhin D.M."/>
            <person name="Krieger I.V."/>
            <person name="Huizar J.P."/>
            <person name="Mavrici D."/>
            <person name="Waldo G.S."/>
            <person name="Hung L.W."/>
            <person name="Sacchettini J.C."/>
            <person name="Terwilliger T.C."/>
            <person name="Alber T."/>
        </authorList>
    </citation>
    <scope>X-RAY CRYSTALLOGRAPHY (2.00 ANGSTROMS) OF 25-291 OF MUTANT IN COMPLEX WITH PMSF</scope>
    <scope>FUNCTION</scope>
    <scope>ACTIVITY REGULATION</scope>
    <scope>SUBCELLULAR LOCATION</scope>
    <scope>ACTIVE SITE</scope>
</reference>
<reference evidence="15" key="7">
    <citation type="submission" date="2014-12" db="PDB data bank">
        <title>The crystal structure of D-alanyl-D-alanine carboxypeptidase from Mycobacterium tuberculosis H37Rv.</title>
        <authorList>
            <person name="Cuff M."/>
            <person name="Tan K."/>
            <person name="Hatzos-Skintges C."/>
            <person name="Jedrzejczak R."/>
            <person name="Sacchettini J."/>
            <person name="Joachimiak A."/>
        </authorList>
    </citation>
    <scope>X-RAY CRYSTALLOGRAPHY (1.90 ANGSTROMS) OF 26-291</scope>
    <source>
        <strain>H37Rv</strain>
    </source>
</reference>
<proteinExistence type="evidence at protein level"/>
<dbReference type="EC" id="3.4.16.-" evidence="4"/>
<dbReference type="EMBL" id="AL123456">
    <property type="protein sequence ID" value="CCP45713.1"/>
    <property type="molecule type" value="Genomic_DNA"/>
</dbReference>
<dbReference type="RefSeq" id="WP_003414736.1">
    <property type="nucleotide sequence ID" value="NZ_NVQJ01000006.1"/>
</dbReference>
<dbReference type="RefSeq" id="YP_177914.1">
    <property type="nucleotide sequence ID" value="NC_000962.3"/>
</dbReference>
<dbReference type="PDB" id="4P0M">
    <property type="method" value="X-ray"/>
    <property type="resolution" value="2.00 A"/>
    <property type="chains" value="A=25-291"/>
</dbReference>
<dbReference type="PDB" id="4RYE">
    <property type="method" value="X-ray"/>
    <property type="resolution" value="1.90 A"/>
    <property type="chains" value="A/B/C/D=26-291"/>
</dbReference>
<dbReference type="PDBsum" id="4P0M"/>
<dbReference type="PDBsum" id="4RYE"/>
<dbReference type="SMR" id="I6Y204"/>
<dbReference type="FunCoup" id="I6Y204">
    <property type="interactions" value="22"/>
</dbReference>
<dbReference type="STRING" id="83332.Rv2911"/>
<dbReference type="PaxDb" id="83332-Rv2911"/>
<dbReference type="DNASU" id="887189"/>
<dbReference type="GeneID" id="45426898"/>
<dbReference type="GeneID" id="887189"/>
<dbReference type="KEGG" id="mtu:Rv2911"/>
<dbReference type="KEGG" id="mtv:RVBD_2911"/>
<dbReference type="PATRIC" id="fig|83332.111.peg.3240"/>
<dbReference type="TubercuList" id="Rv2911"/>
<dbReference type="eggNOG" id="COG1686">
    <property type="taxonomic scope" value="Bacteria"/>
</dbReference>
<dbReference type="InParanoid" id="I6Y204"/>
<dbReference type="OrthoDB" id="3663940at2"/>
<dbReference type="PhylomeDB" id="I6Y204"/>
<dbReference type="UniPathway" id="UPA00219"/>
<dbReference type="EvolutionaryTrace" id="I6Y204"/>
<dbReference type="Proteomes" id="UP000001584">
    <property type="component" value="Chromosome"/>
</dbReference>
<dbReference type="GO" id="GO:0042597">
    <property type="term" value="C:periplasmic space"/>
    <property type="evidence" value="ECO:0007669"/>
    <property type="project" value="UniProtKB-SubCell"/>
</dbReference>
<dbReference type="GO" id="GO:0009002">
    <property type="term" value="F:serine-type D-Ala-D-Ala carboxypeptidase activity"/>
    <property type="evidence" value="ECO:0007669"/>
    <property type="project" value="InterPro"/>
</dbReference>
<dbReference type="GO" id="GO:0071555">
    <property type="term" value="P:cell wall organization"/>
    <property type="evidence" value="ECO:0007669"/>
    <property type="project" value="UniProtKB-KW"/>
</dbReference>
<dbReference type="GO" id="GO:0009252">
    <property type="term" value="P:peptidoglycan biosynthetic process"/>
    <property type="evidence" value="ECO:0007669"/>
    <property type="project" value="UniProtKB-UniPathway"/>
</dbReference>
<dbReference type="GO" id="GO:0006508">
    <property type="term" value="P:proteolysis"/>
    <property type="evidence" value="ECO:0007669"/>
    <property type="project" value="UniProtKB-KW"/>
</dbReference>
<dbReference type="GO" id="GO:0008360">
    <property type="term" value="P:regulation of cell shape"/>
    <property type="evidence" value="ECO:0007669"/>
    <property type="project" value="UniProtKB-KW"/>
</dbReference>
<dbReference type="FunFam" id="3.40.710.10:FF:000071">
    <property type="entry name" value="Probable D-alanyl-D-alanine carboxypeptidase dacB2"/>
    <property type="match status" value="1"/>
</dbReference>
<dbReference type="Gene3D" id="3.40.710.10">
    <property type="entry name" value="DD-peptidase/beta-lactamase superfamily"/>
    <property type="match status" value="1"/>
</dbReference>
<dbReference type="InterPro" id="IPR012338">
    <property type="entry name" value="Beta-lactam/transpept-like"/>
</dbReference>
<dbReference type="InterPro" id="IPR018044">
    <property type="entry name" value="Peptidase_S11"/>
</dbReference>
<dbReference type="InterPro" id="IPR001967">
    <property type="entry name" value="Peptidase_S11_N"/>
</dbReference>
<dbReference type="PANTHER" id="PTHR21581">
    <property type="entry name" value="D-ALANYL-D-ALANINE CARBOXYPEPTIDASE"/>
    <property type="match status" value="1"/>
</dbReference>
<dbReference type="PANTHER" id="PTHR21581:SF33">
    <property type="entry name" value="D-ALANYL-D-ALANINE CARBOXYPEPTIDASE DACB"/>
    <property type="match status" value="1"/>
</dbReference>
<dbReference type="Pfam" id="PF00768">
    <property type="entry name" value="Peptidase_S11"/>
    <property type="match status" value="1"/>
</dbReference>
<dbReference type="PRINTS" id="PR00725">
    <property type="entry name" value="DADACBPTASE1"/>
</dbReference>
<dbReference type="SUPFAM" id="SSF56601">
    <property type="entry name" value="beta-lactamase/transpeptidase-like"/>
    <property type="match status" value="1"/>
</dbReference>
<sequence>MRKLMTATAALCACAVTVSAGAAWADADVQPAGSVPIPDGPAQTWIVADLDSGQVLAGRDQNVAHPPASTIKVLLALVALDELDLNSTVVADVADTQAECNCVGVKPGRSYTARQLLDGLLLVSGNDAANTLAHMLGGQDVTVAKMNAKAATLGATSTHATTPSGLDGPGGSGASTAHDLVVIFRAAMANPVFAQITAEPSAMFPSDNGEQLIVNQDELLQRYPGAIGGKTGYTNAARKTFVGAAARGGRRLVIAMMYGLVKEGGPTYWDQAATLFDWGFALNPQASVGSL</sequence>
<name>DACB2_MYCTU</name>
<accession>I6Y204</accession>
<gene>
    <name evidence="7" type="primary">dacB2</name>
    <name evidence="13" type="ordered locus">Rv2911</name>
</gene>
<comment type="function">
    <text evidence="4 5 6 10">Probably cleaves the terminal D-Ala-D-Ala dipeptide of the peptidoglycan stem peptide (Probable). Shows significant D,D-carboxypeptidase activity in vitro (PubMed:22906310). Acts on the synthetic penta-peptide substrate Penta-DAP (L-Ala-gamma-D-Gln-DAP-D-Ala-D-Ala). Also shows weak activity on Penta-Lys (L-Ala-gamma-Glu-L-Lys-D-Ala-D-Ala) (PubMed:22906310). The catalytic domain binds weakly to peptidoglycan in vitro (PubMed:25551456). Plays an important role in the maintenance of colony morphology and cell wall permeability and integrity (PubMed:25467937).</text>
</comment>
<comment type="activity regulation">
    <text evidence="4 12">Inhibited by the beta-lactam antibiotic meropenem (PubMed:22906310). Inhibited by the non-specific inhibitor phenylmethylsulfonyl fluoride (PMSF) (Probable).</text>
</comment>
<comment type="pathway">
    <text evidence="11">Cell wall biogenesis; peptidoglycan biosynthesis.</text>
</comment>
<comment type="subcellular location">
    <subcellularLocation>
        <location evidence="12">Periplasm</location>
    </subcellularLocation>
</comment>
<comment type="disruption phenotype">
    <text evidence="3 5">Deletion of the gene results in reduced growth in acidic medium under low oxygen conditions. The mutant shows better intracellular growth and survival inside THP-1 cells compared to wild-type and complemented strains. The colony morphology and antibiotic sensitivity of mutant and wild-type strains are similar (PubMed:22138550). The double knockout mutant pknI/dacB2 shows smoother colony morphology on solid agar and exhibits defective biofilm and cord formation. Double mutant is hypersensitive to cell wall damaging agents such as lysozyme, malachite green, ethidium bromide and to isoniazid, a first line anti-TB drug (PubMed:25467937).</text>
</comment>
<comment type="miscellaneous">
    <text evidence="3">Overexpression in Mycobacterium smegmatis results in reduced growth, an altered colony morphology, and a defect in sliding motility and biofilm formation. Overexpression of the S69C mutant shows similar results, indicating that the effects produced are independent of protein's penicillin binding function.</text>
</comment>
<comment type="similarity">
    <text evidence="9">Belongs to the peptidase S11 family.</text>
</comment>
<evidence type="ECO:0000250" key="1">
    <source>
        <dbReference type="UniProtKB" id="P0AEB2"/>
    </source>
</evidence>
<evidence type="ECO:0000255" key="2"/>
<evidence type="ECO:0000269" key="3">
    <source>
    </source>
</evidence>
<evidence type="ECO:0000269" key="4">
    <source>
    </source>
</evidence>
<evidence type="ECO:0000269" key="5">
    <source>
    </source>
</evidence>
<evidence type="ECO:0000269" key="6">
    <source>
    </source>
</evidence>
<evidence type="ECO:0000303" key="7">
    <source>
    </source>
</evidence>
<evidence type="ECO:0000303" key="8">
    <source>
    </source>
</evidence>
<evidence type="ECO:0000305" key="9"/>
<evidence type="ECO:0000305" key="10">
    <source>
    </source>
</evidence>
<evidence type="ECO:0000305" key="11">
    <source>
    </source>
</evidence>
<evidence type="ECO:0000305" key="12">
    <source>
    </source>
</evidence>
<evidence type="ECO:0000312" key="13">
    <source>
        <dbReference type="EMBL" id="CCP45713.1"/>
    </source>
</evidence>
<evidence type="ECO:0007744" key="14">
    <source>
        <dbReference type="PDB" id="4P0M"/>
    </source>
</evidence>
<evidence type="ECO:0007744" key="15">
    <source>
        <dbReference type="PDB" id="4RYE"/>
    </source>
</evidence>
<evidence type="ECO:0007744" key="16">
    <source>
    </source>
</evidence>
<evidence type="ECO:0007829" key="17">
    <source>
        <dbReference type="PDB" id="4RYE"/>
    </source>
</evidence>
<protein>
    <recommendedName>
        <fullName evidence="9">D-alanyl-D-alanine carboxypeptidase DacB2</fullName>
        <shortName evidence="8">D,D-carboxypeptidase DacB2</shortName>
        <shortName evidence="9">DD-carboxypeptidase</shortName>
        <shortName evidence="9">DD-peptidase</shortName>
        <ecNumber evidence="4">3.4.16.-</ecNumber>
    </recommendedName>
</protein>